<proteinExistence type="evidence at protein level"/>
<name>DSOR1_DROME</name>
<reference key="1">
    <citation type="journal article" date="1993" name="Cell">
        <title>A protein kinase similar to MAP kinase activator acts downstream of the raf kinase in Drosophila.</title>
        <authorList>
            <person name="Tsuda L."/>
            <person name="Inoue Y.H."/>
            <person name="Yoo M.-A."/>
            <person name="Mizuno M."/>
            <person name="Hata M."/>
            <person name="Lim Y.-M."/>
            <person name="Adachi-Yamada T."/>
            <person name="Ryo H."/>
            <person name="Masamune Y."/>
            <person name="Nishida Y."/>
        </authorList>
    </citation>
    <scope>NUCLEOTIDE SEQUENCE [GENOMIC DNA]</scope>
    <scope>FUNCTION</scope>
    <scope>DEVELOPMENTAL STAGE</scope>
</reference>
<reference key="2">
    <citation type="journal article" date="2003" name="Mol. Ecol.">
        <title>Contrasting selection pressures on components of the Ras-mediated signal transduction pathway in Drosophila.</title>
        <authorList>
            <person name="Riley R.M."/>
            <person name="Jin W."/>
            <person name="Gibson G."/>
        </authorList>
    </citation>
    <scope>NUCLEOTIDE SEQUENCE [GENOMIC DNA]</scope>
    <source>
        <strain>5-17-88#b1</strain>
        <strain>5-17-88a#4</strain>
        <strain>5-17-88a#6</strain>
        <strain>5-17-88b#1</strain>
        <strain>5-17-88b#5</strain>
        <strain>7-21-88#b2</strain>
        <strain>7-21-88b#1</strain>
        <strain>7-21-88b#2</strain>
        <strain>7-21-88b#4</strain>
        <strain>AA1</strain>
        <strain>AA16</strain>
        <strain>AA18</strain>
        <strain>AA20</strain>
        <strain>AA3</strain>
        <strain>CA2</strain>
        <strain>M2</strain>
        <strain>PYR2</strain>
        <strain>Reids2</strain>
        <strain>wild5b</strain>
    </source>
</reference>
<reference key="3">
    <citation type="journal article" date="2000" name="Science">
        <title>The genome sequence of Drosophila melanogaster.</title>
        <authorList>
            <person name="Adams M.D."/>
            <person name="Celniker S.E."/>
            <person name="Holt R.A."/>
            <person name="Evans C.A."/>
            <person name="Gocayne J.D."/>
            <person name="Amanatides P.G."/>
            <person name="Scherer S.E."/>
            <person name="Li P.W."/>
            <person name="Hoskins R.A."/>
            <person name="Galle R.F."/>
            <person name="George R.A."/>
            <person name="Lewis S.E."/>
            <person name="Richards S."/>
            <person name="Ashburner M."/>
            <person name="Henderson S.N."/>
            <person name="Sutton G.G."/>
            <person name="Wortman J.R."/>
            <person name="Yandell M.D."/>
            <person name="Zhang Q."/>
            <person name="Chen L.X."/>
            <person name="Brandon R.C."/>
            <person name="Rogers Y.-H.C."/>
            <person name="Blazej R.G."/>
            <person name="Champe M."/>
            <person name="Pfeiffer B.D."/>
            <person name="Wan K.H."/>
            <person name="Doyle C."/>
            <person name="Baxter E.G."/>
            <person name="Helt G."/>
            <person name="Nelson C.R."/>
            <person name="Miklos G.L.G."/>
            <person name="Abril J.F."/>
            <person name="Agbayani A."/>
            <person name="An H.-J."/>
            <person name="Andrews-Pfannkoch C."/>
            <person name="Baldwin D."/>
            <person name="Ballew R.M."/>
            <person name="Basu A."/>
            <person name="Baxendale J."/>
            <person name="Bayraktaroglu L."/>
            <person name="Beasley E.M."/>
            <person name="Beeson K.Y."/>
            <person name="Benos P.V."/>
            <person name="Berman B.P."/>
            <person name="Bhandari D."/>
            <person name="Bolshakov S."/>
            <person name="Borkova D."/>
            <person name="Botchan M.R."/>
            <person name="Bouck J."/>
            <person name="Brokstein P."/>
            <person name="Brottier P."/>
            <person name="Burtis K.C."/>
            <person name="Busam D.A."/>
            <person name="Butler H."/>
            <person name="Cadieu E."/>
            <person name="Center A."/>
            <person name="Chandra I."/>
            <person name="Cherry J.M."/>
            <person name="Cawley S."/>
            <person name="Dahlke C."/>
            <person name="Davenport L.B."/>
            <person name="Davies P."/>
            <person name="de Pablos B."/>
            <person name="Delcher A."/>
            <person name="Deng Z."/>
            <person name="Mays A.D."/>
            <person name="Dew I."/>
            <person name="Dietz S.M."/>
            <person name="Dodson K."/>
            <person name="Doup L.E."/>
            <person name="Downes M."/>
            <person name="Dugan-Rocha S."/>
            <person name="Dunkov B.C."/>
            <person name="Dunn P."/>
            <person name="Durbin K.J."/>
            <person name="Evangelista C.C."/>
            <person name="Ferraz C."/>
            <person name="Ferriera S."/>
            <person name="Fleischmann W."/>
            <person name="Fosler C."/>
            <person name="Gabrielian A.E."/>
            <person name="Garg N.S."/>
            <person name="Gelbart W.M."/>
            <person name="Glasser K."/>
            <person name="Glodek A."/>
            <person name="Gong F."/>
            <person name="Gorrell J.H."/>
            <person name="Gu Z."/>
            <person name="Guan P."/>
            <person name="Harris M."/>
            <person name="Harris N.L."/>
            <person name="Harvey D.A."/>
            <person name="Heiman T.J."/>
            <person name="Hernandez J.R."/>
            <person name="Houck J."/>
            <person name="Hostin D."/>
            <person name="Houston K.A."/>
            <person name="Howland T.J."/>
            <person name="Wei M.-H."/>
            <person name="Ibegwam C."/>
            <person name="Jalali M."/>
            <person name="Kalush F."/>
            <person name="Karpen G.H."/>
            <person name="Ke Z."/>
            <person name="Kennison J.A."/>
            <person name="Ketchum K.A."/>
            <person name="Kimmel B.E."/>
            <person name="Kodira C.D."/>
            <person name="Kraft C.L."/>
            <person name="Kravitz S."/>
            <person name="Kulp D."/>
            <person name="Lai Z."/>
            <person name="Lasko P."/>
            <person name="Lei Y."/>
            <person name="Levitsky A.A."/>
            <person name="Li J.H."/>
            <person name="Li Z."/>
            <person name="Liang Y."/>
            <person name="Lin X."/>
            <person name="Liu X."/>
            <person name="Mattei B."/>
            <person name="McIntosh T.C."/>
            <person name="McLeod M.P."/>
            <person name="McPherson D."/>
            <person name="Merkulov G."/>
            <person name="Milshina N.V."/>
            <person name="Mobarry C."/>
            <person name="Morris J."/>
            <person name="Moshrefi A."/>
            <person name="Mount S.M."/>
            <person name="Moy M."/>
            <person name="Murphy B."/>
            <person name="Murphy L."/>
            <person name="Muzny D.M."/>
            <person name="Nelson D.L."/>
            <person name="Nelson D.R."/>
            <person name="Nelson K.A."/>
            <person name="Nixon K."/>
            <person name="Nusskern D.R."/>
            <person name="Pacleb J.M."/>
            <person name="Palazzolo M."/>
            <person name="Pittman G.S."/>
            <person name="Pan S."/>
            <person name="Pollard J."/>
            <person name="Puri V."/>
            <person name="Reese M.G."/>
            <person name="Reinert K."/>
            <person name="Remington K."/>
            <person name="Saunders R.D.C."/>
            <person name="Scheeler F."/>
            <person name="Shen H."/>
            <person name="Shue B.C."/>
            <person name="Siden-Kiamos I."/>
            <person name="Simpson M."/>
            <person name="Skupski M.P."/>
            <person name="Smith T.J."/>
            <person name="Spier E."/>
            <person name="Spradling A.C."/>
            <person name="Stapleton M."/>
            <person name="Strong R."/>
            <person name="Sun E."/>
            <person name="Svirskas R."/>
            <person name="Tector C."/>
            <person name="Turner R."/>
            <person name="Venter E."/>
            <person name="Wang A.H."/>
            <person name="Wang X."/>
            <person name="Wang Z.-Y."/>
            <person name="Wassarman D.A."/>
            <person name="Weinstock G.M."/>
            <person name="Weissenbach J."/>
            <person name="Williams S.M."/>
            <person name="Woodage T."/>
            <person name="Worley K.C."/>
            <person name="Wu D."/>
            <person name="Yang S."/>
            <person name="Yao Q.A."/>
            <person name="Ye J."/>
            <person name="Yeh R.-F."/>
            <person name="Zaveri J.S."/>
            <person name="Zhan M."/>
            <person name="Zhang G."/>
            <person name="Zhao Q."/>
            <person name="Zheng L."/>
            <person name="Zheng X.H."/>
            <person name="Zhong F.N."/>
            <person name="Zhong W."/>
            <person name="Zhou X."/>
            <person name="Zhu S.C."/>
            <person name="Zhu X."/>
            <person name="Smith H.O."/>
            <person name="Gibbs R.A."/>
            <person name="Myers E.W."/>
            <person name="Rubin G.M."/>
            <person name="Venter J.C."/>
        </authorList>
    </citation>
    <scope>NUCLEOTIDE SEQUENCE [LARGE SCALE GENOMIC DNA]</scope>
    <source>
        <strain>Berkeley</strain>
    </source>
</reference>
<reference key="4">
    <citation type="journal article" date="2002" name="Genome Biol.">
        <title>Annotation of the Drosophila melanogaster euchromatic genome: a systematic review.</title>
        <authorList>
            <person name="Misra S."/>
            <person name="Crosby M.A."/>
            <person name="Mungall C.J."/>
            <person name="Matthews B.B."/>
            <person name="Campbell K.S."/>
            <person name="Hradecky P."/>
            <person name="Huang Y."/>
            <person name="Kaminker J.S."/>
            <person name="Millburn G.H."/>
            <person name="Prochnik S.E."/>
            <person name="Smith C.D."/>
            <person name="Tupy J.L."/>
            <person name="Whitfield E.J."/>
            <person name="Bayraktaroglu L."/>
            <person name="Berman B.P."/>
            <person name="Bettencourt B.R."/>
            <person name="Celniker S.E."/>
            <person name="de Grey A.D.N.J."/>
            <person name="Drysdale R.A."/>
            <person name="Harris N.L."/>
            <person name="Richter J."/>
            <person name="Russo S."/>
            <person name="Schroeder A.J."/>
            <person name="Shu S.Q."/>
            <person name="Stapleton M."/>
            <person name="Yamada C."/>
            <person name="Ashburner M."/>
            <person name="Gelbart W.M."/>
            <person name="Rubin G.M."/>
            <person name="Lewis S.E."/>
        </authorList>
    </citation>
    <scope>GENOME REANNOTATION</scope>
    <source>
        <strain>Berkeley</strain>
    </source>
</reference>
<reference key="5">
    <citation type="journal article" date="2002" name="Genome Biol.">
        <title>A Drosophila full-length cDNA resource.</title>
        <authorList>
            <person name="Stapleton M."/>
            <person name="Carlson J.W."/>
            <person name="Brokstein P."/>
            <person name="Yu C."/>
            <person name="Champe M."/>
            <person name="George R.A."/>
            <person name="Guarin H."/>
            <person name="Kronmiller B."/>
            <person name="Pacleb J.M."/>
            <person name="Park S."/>
            <person name="Wan K.H."/>
            <person name="Rubin G.M."/>
            <person name="Celniker S.E."/>
        </authorList>
    </citation>
    <scope>NUCLEOTIDE SEQUENCE [LARGE SCALE MRNA]</scope>
    <source>
        <strain>Berkeley</strain>
        <tissue>Embryo</tissue>
    </source>
</reference>
<reference key="6">
    <citation type="journal article" date="2018" name="Nature">
        <title>MEK drives BRAF activation through allosteric control of KSR proteins.</title>
        <authorList>
            <person name="Lavoie H."/>
            <person name="Sahmi M."/>
            <person name="Maisonneuve P."/>
            <person name="Marullo S.A."/>
            <person name="Thevakumaran N."/>
            <person name="Jin T."/>
            <person name="Kurinov I."/>
            <person name="Sicheri F."/>
            <person name="Therrien M."/>
        </authorList>
    </citation>
    <scope>INTERACTION WITH KSR AND RAF</scope>
    <scope>PHOSPHORYLATION AT SER-237 AND SER-241</scope>
</reference>
<comment type="function">
    <text evidence="6">Required downstream of Raf in the sevenless (sev), torso (tor), and Drosophila EGF receptor homolog (DER) signal transduction pathways. Involved in both positive regulation (at the posterior terminus) and negative regulation (at the anterior domain) of tll, as in other terminal class gene products, maybe via the ERK-A kinase.</text>
</comment>
<comment type="catalytic activity">
    <reaction>
        <text>L-seryl-[protein] + ATP = O-phospho-L-seryl-[protein] + ADP + H(+)</text>
        <dbReference type="Rhea" id="RHEA:17989"/>
        <dbReference type="Rhea" id="RHEA-COMP:9863"/>
        <dbReference type="Rhea" id="RHEA-COMP:11604"/>
        <dbReference type="ChEBI" id="CHEBI:15378"/>
        <dbReference type="ChEBI" id="CHEBI:29999"/>
        <dbReference type="ChEBI" id="CHEBI:30616"/>
        <dbReference type="ChEBI" id="CHEBI:83421"/>
        <dbReference type="ChEBI" id="CHEBI:456216"/>
        <dbReference type="EC" id="2.7.12.2"/>
    </reaction>
</comment>
<comment type="catalytic activity">
    <reaction>
        <text>L-threonyl-[protein] + ATP = O-phospho-L-threonyl-[protein] + ADP + H(+)</text>
        <dbReference type="Rhea" id="RHEA:46608"/>
        <dbReference type="Rhea" id="RHEA-COMP:11060"/>
        <dbReference type="Rhea" id="RHEA-COMP:11605"/>
        <dbReference type="ChEBI" id="CHEBI:15378"/>
        <dbReference type="ChEBI" id="CHEBI:30013"/>
        <dbReference type="ChEBI" id="CHEBI:30616"/>
        <dbReference type="ChEBI" id="CHEBI:61977"/>
        <dbReference type="ChEBI" id="CHEBI:456216"/>
        <dbReference type="EC" id="2.7.12.2"/>
    </reaction>
</comment>
<comment type="catalytic activity">
    <reaction>
        <text>L-tyrosyl-[protein] + ATP = O-phospho-L-tyrosyl-[protein] + ADP + H(+)</text>
        <dbReference type="Rhea" id="RHEA:10596"/>
        <dbReference type="Rhea" id="RHEA-COMP:10136"/>
        <dbReference type="Rhea" id="RHEA-COMP:20101"/>
        <dbReference type="ChEBI" id="CHEBI:15378"/>
        <dbReference type="ChEBI" id="CHEBI:30616"/>
        <dbReference type="ChEBI" id="CHEBI:46858"/>
        <dbReference type="ChEBI" id="CHEBI:61978"/>
        <dbReference type="ChEBI" id="CHEBI:456216"/>
        <dbReference type="EC" id="2.7.12.2"/>
    </reaction>
</comment>
<comment type="subunit">
    <text evidence="5">Interacts with Raf and ksr; Dsor1 binding to ksr probably promotes ksr and Raf dimerization and ksr-mediated Raf transactivation.</text>
</comment>
<comment type="interaction">
    <interactant intactId="EBI-671282">
        <id>Q24324</id>
    </interactant>
    <interactant intactId="EBI-664624">
        <id>P11346</id>
        <label>Raf</label>
    </interactant>
    <organismsDiffer>false</organismsDiffer>
    <experiments>4</experiments>
</comment>
<comment type="developmental stage">
    <text evidence="6">Expressed both maternally and zygotically.</text>
</comment>
<comment type="PTM">
    <text evidence="1">Phosphorylation on Ser/Thr by MAP kinase kinase kinases regulates positively the kinase activity.</text>
</comment>
<comment type="similarity">
    <text evidence="7">Belongs to the protein kinase superfamily. STE Ser/Thr protein kinase family. MAP kinase kinase subfamily.</text>
</comment>
<comment type="sequence caution" evidence="7">
    <conflict type="erroneous gene model prediction">
        <sequence resource="EMBL-CDS" id="BAA02925"/>
    </conflict>
</comment>
<dbReference type="EC" id="2.7.12.2"/>
<dbReference type="EMBL" id="D13782">
    <property type="protein sequence ID" value="BAA02925.1"/>
    <property type="status" value="ALT_SEQ"/>
    <property type="molecule type" value="Genomic_DNA"/>
</dbReference>
<dbReference type="EMBL" id="AY135075">
    <property type="protein sequence ID" value="AAN17587.1"/>
    <property type="molecule type" value="Genomic_DNA"/>
</dbReference>
<dbReference type="EMBL" id="AY135076">
    <property type="protein sequence ID" value="AAN17588.1"/>
    <property type="molecule type" value="Genomic_DNA"/>
</dbReference>
<dbReference type="EMBL" id="AY135077">
    <property type="protein sequence ID" value="AAN17589.1"/>
    <property type="molecule type" value="Genomic_DNA"/>
</dbReference>
<dbReference type="EMBL" id="AY135078">
    <property type="protein sequence ID" value="AAN17590.1"/>
    <property type="molecule type" value="Genomic_DNA"/>
</dbReference>
<dbReference type="EMBL" id="AY135079">
    <property type="protein sequence ID" value="AAN17591.1"/>
    <property type="molecule type" value="Genomic_DNA"/>
</dbReference>
<dbReference type="EMBL" id="AY135080">
    <property type="protein sequence ID" value="AAN17592.1"/>
    <property type="molecule type" value="Genomic_DNA"/>
</dbReference>
<dbReference type="EMBL" id="AY135081">
    <property type="protein sequence ID" value="AAN17593.1"/>
    <property type="molecule type" value="Genomic_DNA"/>
</dbReference>
<dbReference type="EMBL" id="AY135082">
    <property type="protein sequence ID" value="AAN17594.1"/>
    <property type="molecule type" value="Genomic_DNA"/>
</dbReference>
<dbReference type="EMBL" id="AY135083">
    <property type="protein sequence ID" value="AAN17595.1"/>
    <property type="molecule type" value="Genomic_DNA"/>
</dbReference>
<dbReference type="EMBL" id="AY135084">
    <property type="protein sequence ID" value="AAN17596.1"/>
    <property type="molecule type" value="Genomic_DNA"/>
</dbReference>
<dbReference type="EMBL" id="AY135085">
    <property type="protein sequence ID" value="AAN17597.1"/>
    <property type="molecule type" value="Genomic_DNA"/>
</dbReference>
<dbReference type="EMBL" id="AY135086">
    <property type="protein sequence ID" value="AAN17598.1"/>
    <property type="molecule type" value="Genomic_DNA"/>
</dbReference>
<dbReference type="EMBL" id="AY135087">
    <property type="protein sequence ID" value="AAN17599.1"/>
    <property type="molecule type" value="Genomic_DNA"/>
</dbReference>
<dbReference type="EMBL" id="AY135088">
    <property type="protein sequence ID" value="AAN17600.1"/>
    <property type="molecule type" value="Genomic_DNA"/>
</dbReference>
<dbReference type="EMBL" id="AY135089">
    <property type="protein sequence ID" value="AAN17601.1"/>
    <property type="molecule type" value="Genomic_DNA"/>
</dbReference>
<dbReference type="EMBL" id="AY135090">
    <property type="protein sequence ID" value="AAN17602.1"/>
    <property type="molecule type" value="Genomic_DNA"/>
</dbReference>
<dbReference type="EMBL" id="AY135091">
    <property type="protein sequence ID" value="AAN17603.1"/>
    <property type="molecule type" value="Genomic_DNA"/>
</dbReference>
<dbReference type="EMBL" id="AY135092">
    <property type="protein sequence ID" value="AAN17604.1"/>
    <property type="molecule type" value="Genomic_DNA"/>
</dbReference>
<dbReference type="EMBL" id="AY135093">
    <property type="protein sequence ID" value="AAN17605.1"/>
    <property type="molecule type" value="Genomic_DNA"/>
</dbReference>
<dbReference type="EMBL" id="AE014298">
    <property type="protein sequence ID" value="AAF46475.1"/>
    <property type="molecule type" value="Genomic_DNA"/>
</dbReference>
<dbReference type="EMBL" id="AY058692">
    <property type="protein sequence ID" value="AAL13921.1"/>
    <property type="molecule type" value="mRNA"/>
</dbReference>
<dbReference type="PIR" id="A45176">
    <property type="entry name" value="A45176"/>
</dbReference>
<dbReference type="RefSeq" id="NP_001285044.1">
    <property type="nucleotide sequence ID" value="NM_001298115.1"/>
</dbReference>
<dbReference type="RefSeq" id="NP_511098.1">
    <property type="nucleotide sequence ID" value="NM_078543.4"/>
</dbReference>
<dbReference type="PDB" id="8BW9">
    <property type="method" value="EM"/>
    <property type="resolution" value="3.32 A"/>
    <property type="chains" value="C=1-396"/>
</dbReference>
<dbReference type="PDBsum" id="8BW9"/>
<dbReference type="EMDB" id="EMD-16281"/>
<dbReference type="SMR" id="Q24324"/>
<dbReference type="BioGRID" id="58322">
    <property type="interactions" value="109"/>
</dbReference>
<dbReference type="DIP" id="DIP-29770N"/>
<dbReference type="FunCoup" id="Q24324">
    <property type="interactions" value="1599"/>
</dbReference>
<dbReference type="IntAct" id="Q24324">
    <property type="interactions" value="7"/>
</dbReference>
<dbReference type="MINT" id="Q24324"/>
<dbReference type="STRING" id="7227.FBpp0071248"/>
<dbReference type="GlyGen" id="Q24324">
    <property type="glycosylation" value="1 site"/>
</dbReference>
<dbReference type="iPTMnet" id="Q24324"/>
<dbReference type="PaxDb" id="7227-FBpp0071248"/>
<dbReference type="EnsemblMetazoa" id="FBtr0071313">
    <property type="protein sequence ID" value="FBpp0071248"/>
    <property type="gene ID" value="FBgn0010269"/>
</dbReference>
<dbReference type="GeneID" id="31872"/>
<dbReference type="KEGG" id="dme:Dmel_CG15793"/>
<dbReference type="AGR" id="FB:FBgn0010269"/>
<dbReference type="CTD" id="31872"/>
<dbReference type="FlyBase" id="FBgn0010269">
    <property type="gene designation" value="Dsor1"/>
</dbReference>
<dbReference type="VEuPathDB" id="VectorBase:FBgn0010269"/>
<dbReference type="eggNOG" id="KOG0581">
    <property type="taxonomic scope" value="Eukaryota"/>
</dbReference>
<dbReference type="GeneTree" id="ENSGT00940000153487"/>
<dbReference type="InParanoid" id="Q24324"/>
<dbReference type="OMA" id="QMTLTEP"/>
<dbReference type="OrthoDB" id="10252354at2759"/>
<dbReference type="PhylomeDB" id="Q24324"/>
<dbReference type="BRENDA" id="2.4.1.222">
    <property type="organism ID" value="1994"/>
</dbReference>
<dbReference type="BRENDA" id="2.7.12.2">
    <property type="organism ID" value="1994"/>
</dbReference>
<dbReference type="Reactome" id="R-DME-110056">
    <property type="pathway name" value="MAPK3 (ERK1) activation"/>
</dbReference>
<dbReference type="Reactome" id="R-DME-112411">
    <property type="pathway name" value="MAPK1 (ERK2) activation"/>
</dbReference>
<dbReference type="Reactome" id="R-DME-170968">
    <property type="pathway name" value="Frs2-mediated activation"/>
</dbReference>
<dbReference type="Reactome" id="R-DME-209190">
    <property type="pathway name" value="Phosphorylation of CI"/>
</dbReference>
<dbReference type="Reactome" id="R-DME-209214">
    <property type="pathway name" value="Phosphorylation of SMO"/>
</dbReference>
<dbReference type="Reactome" id="R-DME-432553">
    <property type="pathway name" value="Phosphorylation of PER and TIM"/>
</dbReference>
<dbReference type="Reactome" id="R-DME-445144">
    <property type="pathway name" value="Signal transduction by L1"/>
</dbReference>
<dbReference type="Reactome" id="R-DME-5673000">
    <property type="pathway name" value="RAF activation"/>
</dbReference>
<dbReference type="Reactome" id="R-DME-5674135">
    <property type="pathway name" value="MAP2K and MAPK activation"/>
</dbReference>
<dbReference type="Reactome" id="R-DME-5674499">
    <property type="pathway name" value="Negative feedback regulation of MAPK pathway"/>
</dbReference>
<dbReference type="SignaLink" id="Q24324"/>
<dbReference type="BioGRID-ORCS" id="31872">
    <property type="hits" value="1 hit in 3 CRISPR screens"/>
</dbReference>
<dbReference type="GenomeRNAi" id="31872"/>
<dbReference type="PRO" id="PR:Q24324"/>
<dbReference type="Proteomes" id="UP000000803">
    <property type="component" value="Chromosome X"/>
</dbReference>
<dbReference type="Bgee" id="FBgn0010269">
    <property type="expression patterns" value="Expressed in T neuron T5a (Drosophila) in embryonic/larval optic lobe (Drosophila) and 146 other cell types or tissues"/>
</dbReference>
<dbReference type="ExpressionAtlas" id="Q24324">
    <property type="expression patterns" value="baseline and differential"/>
</dbReference>
<dbReference type="GO" id="GO:0000793">
    <property type="term" value="C:condensed chromosome"/>
    <property type="evidence" value="ECO:0000314"/>
    <property type="project" value="FlyBase"/>
</dbReference>
<dbReference type="GO" id="GO:0005829">
    <property type="term" value="C:cytosol"/>
    <property type="evidence" value="ECO:0000304"/>
    <property type="project" value="Reactome"/>
</dbReference>
<dbReference type="GO" id="GO:0005524">
    <property type="term" value="F:ATP binding"/>
    <property type="evidence" value="ECO:0007669"/>
    <property type="project" value="UniProtKB-KW"/>
</dbReference>
<dbReference type="GO" id="GO:0019900">
    <property type="term" value="F:kinase binding"/>
    <property type="evidence" value="ECO:0000353"/>
    <property type="project" value="UniProtKB"/>
</dbReference>
<dbReference type="GO" id="GO:0004708">
    <property type="term" value="F:MAP kinase kinase activity"/>
    <property type="evidence" value="ECO:0000314"/>
    <property type="project" value="FlyBase"/>
</dbReference>
<dbReference type="GO" id="GO:0106310">
    <property type="term" value="F:protein serine kinase activity"/>
    <property type="evidence" value="ECO:0007669"/>
    <property type="project" value="RHEA"/>
</dbReference>
<dbReference type="GO" id="GO:0004674">
    <property type="term" value="F:protein serine/threonine kinase activity"/>
    <property type="evidence" value="ECO:0007669"/>
    <property type="project" value="UniProtKB-KW"/>
</dbReference>
<dbReference type="GO" id="GO:0004713">
    <property type="term" value="F:protein tyrosine kinase activity"/>
    <property type="evidence" value="ECO:0007669"/>
    <property type="project" value="UniProtKB-KW"/>
</dbReference>
<dbReference type="GO" id="GO:0007298">
    <property type="term" value="P:border follicle cell migration"/>
    <property type="evidence" value="ECO:0000316"/>
    <property type="project" value="FlyBase"/>
</dbReference>
<dbReference type="GO" id="GO:0071481">
    <property type="term" value="P:cellular response to X-ray"/>
    <property type="evidence" value="ECO:0000315"/>
    <property type="project" value="FlyBase"/>
</dbReference>
<dbReference type="GO" id="GO:0051607">
    <property type="term" value="P:defense response to virus"/>
    <property type="evidence" value="ECO:0000315"/>
    <property type="project" value="FlyBase"/>
</dbReference>
<dbReference type="GO" id="GO:0008340">
    <property type="term" value="P:determination of adult lifespan"/>
    <property type="evidence" value="ECO:0000315"/>
    <property type="project" value="FlyBase"/>
</dbReference>
<dbReference type="GO" id="GO:0009953">
    <property type="term" value="P:dorsal/ventral pattern formation"/>
    <property type="evidence" value="ECO:0000316"/>
    <property type="project" value="FlyBase"/>
</dbReference>
<dbReference type="GO" id="GO:0007173">
    <property type="term" value="P:epidermal growth factor receptor signaling pathway"/>
    <property type="evidence" value="ECO:0000315"/>
    <property type="project" value="FlyBase"/>
</dbReference>
<dbReference type="GO" id="GO:0070371">
    <property type="term" value="P:ERK1 and ERK2 cascade"/>
    <property type="evidence" value="ECO:0000314"/>
    <property type="project" value="FlyBase"/>
</dbReference>
<dbReference type="GO" id="GO:0008543">
    <property type="term" value="P:fibroblast growth factor receptor signaling pathway"/>
    <property type="evidence" value="ECO:0000315"/>
    <property type="project" value="FlyBase"/>
</dbReference>
<dbReference type="GO" id="GO:0042386">
    <property type="term" value="P:hemocyte differentiation"/>
    <property type="evidence" value="ECO:0000316"/>
    <property type="project" value="FlyBase"/>
</dbReference>
<dbReference type="GO" id="GO:0008286">
    <property type="term" value="P:insulin receptor signaling pathway"/>
    <property type="evidence" value="ECO:0000314"/>
    <property type="project" value="FlyBase"/>
</dbReference>
<dbReference type="GO" id="GO:0000165">
    <property type="term" value="P:MAPK cascade"/>
    <property type="evidence" value="ECO:0000318"/>
    <property type="project" value="GO_Central"/>
</dbReference>
<dbReference type="GO" id="GO:0033314">
    <property type="term" value="P:mitotic DNA replication checkpoint signaling"/>
    <property type="evidence" value="ECO:0000315"/>
    <property type="project" value="FlyBase"/>
</dbReference>
<dbReference type="GO" id="GO:0007095">
    <property type="term" value="P:mitotic G2 DNA damage checkpoint signaling"/>
    <property type="evidence" value="ECO:0000315"/>
    <property type="project" value="FlyBase"/>
</dbReference>
<dbReference type="GO" id="GO:0042461">
    <property type="term" value="P:photoreceptor cell development"/>
    <property type="evidence" value="ECO:0000316"/>
    <property type="project" value="UniProtKB"/>
</dbReference>
<dbReference type="GO" id="GO:0007465">
    <property type="term" value="P:R7 cell fate commitment"/>
    <property type="evidence" value="ECO:0000315"/>
    <property type="project" value="FlyBase"/>
</dbReference>
<dbReference type="GO" id="GO:0045500">
    <property type="term" value="P:sevenless signaling pathway"/>
    <property type="evidence" value="ECO:0000315"/>
    <property type="project" value="FlyBase"/>
</dbReference>
<dbReference type="GO" id="GO:0007430">
    <property type="term" value="P:terminal branching, open tracheal system"/>
    <property type="evidence" value="ECO:0000315"/>
    <property type="project" value="FlyBase"/>
</dbReference>
<dbReference type="GO" id="GO:0007362">
    <property type="term" value="P:terminal region determination"/>
    <property type="evidence" value="ECO:0000315"/>
    <property type="project" value="FlyBase"/>
</dbReference>
<dbReference type="GO" id="GO:0008293">
    <property type="term" value="P:torso signaling pathway"/>
    <property type="evidence" value="ECO:0000315"/>
    <property type="project" value="FlyBase"/>
</dbReference>
<dbReference type="GO" id="GO:0048010">
    <property type="term" value="P:vascular endothelial growth factor receptor signaling pathway"/>
    <property type="evidence" value="ECO:0000314"/>
    <property type="project" value="FlyBase"/>
</dbReference>
<dbReference type="CDD" id="cd06615">
    <property type="entry name" value="PKc_MEK"/>
    <property type="match status" value="1"/>
</dbReference>
<dbReference type="FunFam" id="1.10.510.10:FF:000115">
    <property type="entry name" value="Dual specificity mitogen-activated protein kinase kinase 1"/>
    <property type="match status" value="1"/>
</dbReference>
<dbReference type="FunFam" id="3.30.200.20:FF:000100">
    <property type="entry name" value="Dual specificity mitogen-activated protein kinase kinase 1"/>
    <property type="match status" value="1"/>
</dbReference>
<dbReference type="Gene3D" id="3.30.200.20">
    <property type="entry name" value="Phosphorylase Kinase, domain 1"/>
    <property type="match status" value="1"/>
</dbReference>
<dbReference type="Gene3D" id="1.10.510.10">
    <property type="entry name" value="Transferase(Phosphotransferase) domain 1"/>
    <property type="match status" value="1"/>
</dbReference>
<dbReference type="InterPro" id="IPR011009">
    <property type="entry name" value="Kinase-like_dom_sf"/>
</dbReference>
<dbReference type="InterPro" id="IPR050915">
    <property type="entry name" value="MAP_kinase_kinase"/>
</dbReference>
<dbReference type="InterPro" id="IPR000719">
    <property type="entry name" value="Prot_kinase_dom"/>
</dbReference>
<dbReference type="InterPro" id="IPR017441">
    <property type="entry name" value="Protein_kinase_ATP_BS"/>
</dbReference>
<dbReference type="InterPro" id="IPR008271">
    <property type="entry name" value="Ser/Thr_kinase_AS"/>
</dbReference>
<dbReference type="PANTHER" id="PTHR47448">
    <property type="entry name" value="DUAL SPECIFICITY MITOGEN-ACTIVATED PROTEIN KINASE KINASE DSOR1-LIKE PROTEIN"/>
    <property type="match status" value="1"/>
</dbReference>
<dbReference type="PANTHER" id="PTHR47448:SF1">
    <property type="entry name" value="SERINE_THREONINE-PROTEIN KINASE STE7 HOMOLOG"/>
    <property type="match status" value="1"/>
</dbReference>
<dbReference type="Pfam" id="PF00069">
    <property type="entry name" value="Pkinase"/>
    <property type="match status" value="1"/>
</dbReference>
<dbReference type="SMART" id="SM00220">
    <property type="entry name" value="S_TKc"/>
    <property type="match status" value="1"/>
</dbReference>
<dbReference type="SUPFAM" id="SSF56112">
    <property type="entry name" value="Protein kinase-like (PK-like)"/>
    <property type="match status" value="1"/>
</dbReference>
<dbReference type="PROSITE" id="PS00107">
    <property type="entry name" value="PROTEIN_KINASE_ATP"/>
    <property type="match status" value="1"/>
</dbReference>
<dbReference type="PROSITE" id="PS50011">
    <property type="entry name" value="PROTEIN_KINASE_DOM"/>
    <property type="match status" value="1"/>
</dbReference>
<dbReference type="PROSITE" id="PS00108">
    <property type="entry name" value="PROTEIN_KINASE_ST"/>
    <property type="match status" value="1"/>
</dbReference>
<accession>Q24324</accession>
<accession>Q8ISE0</accession>
<accession>Q9W360</accession>
<organism>
    <name type="scientific">Drosophila melanogaster</name>
    <name type="common">Fruit fly</name>
    <dbReference type="NCBI Taxonomy" id="7227"/>
    <lineage>
        <taxon>Eukaryota</taxon>
        <taxon>Metazoa</taxon>
        <taxon>Ecdysozoa</taxon>
        <taxon>Arthropoda</taxon>
        <taxon>Hexapoda</taxon>
        <taxon>Insecta</taxon>
        <taxon>Pterygota</taxon>
        <taxon>Neoptera</taxon>
        <taxon>Endopterygota</taxon>
        <taxon>Diptera</taxon>
        <taxon>Brachycera</taxon>
        <taxon>Muscomorpha</taxon>
        <taxon>Ephydroidea</taxon>
        <taxon>Drosophilidae</taxon>
        <taxon>Drosophila</taxon>
        <taxon>Sophophora</taxon>
    </lineage>
</organism>
<protein>
    <recommendedName>
        <fullName>Dual specificity mitogen-activated protein kinase kinase dSOR1</fullName>
        <shortName>Downstream of RAF</shortName>
        <shortName>MAPKK</shortName>
        <ecNumber>2.7.12.2</ecNumber>
    </recommendedName>
</protein>
<keyword id="KW-0002">3D-structure</keyword>
<keyword id="KW-0067">ATP-binding</keyword>
<keyword id="KW-0217">Developmental protein</keyword>
<keyword id="KW-0418">Kinase</keyword>
<keyword id="KW-0547">Nucleotide-binding</keyword>
<keyword id="KW-0597">Phosphoprotein</keyword>
<keyword id="KW-1185">Reference proteome</keyword>
<keyword id="KW-0723">Serine/threonine-protein kinase</keyword>
<keyword id="KW-0808">Transferase</keyword>
<keyword id="KW-0829">Tyrosine-protein kinase</keyword>
<sequence length="396" mass="43870">MSKNKLNLVLPPVNTEATVAAATVAPTPPFKTPSGTDTHSLLGKPKTSIDALTETLEGLDMGDTERKRIKMFLSQKEKIGELSDEDLEKLGELGSGNGGVVMKVRHTHTHLIMARKLIHLEVKPAIKKQILRELKVLHECNFPHIVGFYGAFYSDGEISICMEYMDGGSLDLILKRAGRIPESILGRITLAVLKGLSYLRDNHAIIHRDVKPSNILVNSSGEIKICDFGVSGQLIDSMANSFVGTRSYMSPERLQGTHYSVQSDIWSLGLSLVEMAIGMYPIPPPNTATLESIFADNAEESGQPTDEPRAMAIFELLDYIVNEPPPKLEHKIFSTEFKDFVDICLKKQPDERADLKTLLSHPWIRKAELEEVDISGWVCKTMDLPPSTPKRNTSPN</sequence>
<gene>
    <name type="primary">Dsor1</name>
    <name type="ORF">CG15793</name>
</gene>
<evidence type="ECO:0000250" key="1"/>
<evidence type="ECO:0000255" key="2">
    <source>
        <dbReference type="PROSITE-ProRule" id="PRU00159"/>
    </source>
</evidence>
<evidence type="ECO:0000255" key="3">
    <source>
        <dbReference type="PROSITE-ProRule" id="PRU10027"/>
    </source>
</evidence>
<evidence type="ECO:0000256" key="4">
    <source>
        <dbReference type="SAM" id="MobiDB-lite"/>
    </source>
</evidence>
<evidence type="ECO:0000269" key="5">
    <source>
    </source>
</evidence>
<evidence type="ECO:0000269" key="6">
    <source>
    </source>
</evidence>
<evidence type="ECO:0000305" key="7"/>
<evidence type="ECO:0007829" key="8">
    <source>
        <dbReference type="PDB" id="8BW9"/>
    </source>
</evidence>
<feature type="chain" id="PRO_0000085928" description="Dual specificity mitogen-activated protein kinase kinase dSOR1">
    <location>
        <begin position="1"/>
        <end position="396"/>
    </location>
</feature>
<feature type="domain" description="Protein kinase" evidence="2">
    <location>
        <begin position="87"/>
        <end position="364"/>
    </location>
</feature>
<feature type="region of interest" description="Disordered" evidence="4">
    <location>
        <begin position="25"/>
        <end position="44"/>
    </location>
</feature>
<feature type="active site" description="Proton acceptor" evidence="2 3">
    <location>
        <position position="209"/>
    </location>
</feature>
<feature type="binding site" evidence="2">
    <location>
        <begin position="93"/>
        <end position="101"/>
    </location>
    <ligand>
        <name>ATP</name>
        <dbReference type="ChEBI" id="CHEBI:30616"/>
    </ligand>
</feature>
<feature type="binding site" evidence="2">
    <location>
        <position position="116"/>
    </location>
    <ligand>
        <name>ATP</name>
        <dbReference type="ChEBI" id="CHEBI:30616"/>
    </ligand>
</feature>
<feature type="modified residue" description="Phosphoserine; by RAF" evidence="5">
    <location>
        <position position="237"/>
    </location>
</feature>
<feature type="modified residue" description="Phosphoserine; by RAF" evidence="5">
    <location>
        <position position="241"/>
    </location>
</feature>
<feature type="sequence variant" description="In strain: Reids2.">
    <original>S</original>
    <variation>L</variation>
    <location>
        <position position="394"/>
    </location>
</feature>
<feature type="helix" evidence="8">
    <location>
        <begin position="84"/>
        <end position="86"/>
    </location>
</feature>
<feature type="strand" evidence="8">
    <location>
        <begin position="95"/>
        <end position="99"/>
    </location>
</feature>
<feature type="strand" evidence="8">
    <location>
        <begin position="116"/>
        <end position="119"/>
    </location>
</feature>
<feature type="helix" evidence="8">
    <location>
        <begin position="124"/>
        <end position="131"/>
    </location>
</feature>
<feature type="helix" evidence="8">
    <location>
        <begin position="135"/>
        <end position="138"/>
    </location>
</feature>
<feature type="strand" evidence="8">
    <location>
        <begin position="148"/>
        <end position="154"/>
    </location>
</feature>
<feature type="strand" evidence="8">
    <location>
        <begin position="157"/>
        <end position="163"/>
    </location>
</feature>
<feature type="helix" evidence="8">
    <location>
        <begin position="170"/>
        <end position="177"/>
    </location>
</feature>
<feature type="helix" evidence="8">
    <location>
        <begin position="182"/>
        <end position="203"/>
    </location>
</feature>
<feature type="strand" evidence="8">
    <location>
        <begin position="219"/>
        <end position="221"/>
    </location>
</feature>
<feature type="helix" evidence="8">
    <location>
        <begin position="232"/>
        <end position="236"/>
    </location>
</feature>
<feature type="turn" evidence="8">
    <location>
        <begin position="251"/>
        <end position="256"/>
    </location>
</feature>
<feature type="helix" evidence="8">
    <location>
        <begin position="262"/>
        <end position="277"/>
    </location>
</feature>
<feature type="helix" evidence="8">
    <location>
        <begin position="313"/>
        <end position="322"/>
    </location>
</feature>
<feature type="helix" evidence="8">
    <location>
        <begin position="335"/>
        <end position="344"/>
    </location>
</feature>
<feature type="helix" evidence="8">
    <location>
        <begin position="349"/>
        <end position="351"/>
    </location>
</feature>
<feature type="helix" evidence="8">
    <location>
        <begin position="355"/>
        <end position="358"/>
    </location>
</feature>
<feature type="helix" evidence="8">
    <location>
        <begin position="362"/>
        <end position="369"/>
    </location>
</feature>
<feature type="helix" evidence="8">
    <location>
        <begin position="374"/>
        <end position="381"/>
    </location>
</feature>